<evidence type="ECO:0000255" key="1">
    <source>
        <dbReference type="PROSITE-ProRule" id="PRU01346"/>
    </source>
</evidence>
<evidence type="ECO:0000269" key="2">
    <source>
    </source>
</evidence>
<evidence type="ECO:0000269" key="3">
    <source>
    </source>
</evidence>
<evidence type="ECO:0000303" key="4">
    <source>
    </source>
</evidence>
<evidence type="ECO:0000303" key="5">
    <source>
    </source>
</evidence>
<evidence type="ECO:0000305" key="6"/>
<evidence type="ECO:0000312" key="7">
    <source>
        <dbReference type="Araport" id="AT3G59810"/>
    </source>
</evidence>
<evidence type="ECO:0000312" key="8">
    <source>
        <dbReference type="EMBL" id="CAB75800.1"/>
    </source>
</evidence>
<keyword id="KW-0963">Cytoplasm</keyword>
<keyword id="KW-0507">mRNA processing</keyword>
<keyword id="KW-0508">mRNA splicing</keyword>
<keyword id="KW-0539">Nucleus</keyword>
<keyword id="KW-1185">Reference proteome</keyword>
<keyword id="KW-0687">Ribonucleoprotein</keyword>
<keyword id="KW-0694">RNA-binding</keyword>
<keyword id="KW-0747">Spliceosome</keyword>
<organism>
    <name type="scientific">Arabidopsis thaliana</name>
    <name type="common">Mouse-ear cress</name>
    <dbReference type="NCBI Taxonomy" id="3702"/>
    <lineage>
        <taxon>Eukaryota</taxon>
        <taxon>Viridiplantae</taxon>
        <taxon>Streptophyta</taxon>
        <taxon>Embryophyta</taxon>
        <taxon>Tracheophyta</taxon>
        <taxon>Spermatophyta</taxon>
        <taxon>Magnoliopsida</taxon>
        <taxon>eudicotyledons</taxon>
        <taxon>Gunneridae</taxon>
        <taxon>Pentapetalae</taxon>
        <taxon>rosids</taxon>
        <taxon>malvids</taxon>
        <taxon>Brassicales</taxon>
        <taxon>Brassicaceae</taxon>
        <taxon>Camelineae</taxon>
        <taxon>Arabidopsis</taxon>
    </lineage>
</organism>
<proteinExistence type="evidence at protein level"/>
<accession>Q9M1Z3</accession>
<accession>A0A1I9LSF1</accession>
<accession>Q8LCS5</accession>
<protein>
    <recommendedName>
        <fullName evidence="6">Sm-like protein LSM6A</fullName>
        <shortName evidence="5">AtLSM6A</shortName>
    </recommendedName>
    <alternativeName>
        <fullName evidence="6">U6 snRNA-associated Sm-like protein LSM6A</fullName>
    </alternativeName>
</protein>
<sequence length="91" mass="9913">MSGVEEKVSGTTKTPADFLKSIRGRPVVVKLNSGVDYRGTLTCLDGYMNIAMEQTEEYVNGQLKNKYGDAFIRGNNVLYISTVNMTVADGA</sequence>
<feature type="chain" id="PRO_0000431648" description="Sm-like protein LSM6A">
    <location>
        <begin position="1"/>
        <end position="91"/>
    </location>
</feature>
<feature type="domain" description="Sm" evidence="1">
    <location>
        <begin position="14"/>
        <end position="86"/>
    </location>
</feature>
<feature type="sequence conflict" description="In Ref. 4; AAM63434." evidence="6" ref="4">
    <original>E</original>
    <variation>G</variation>
    <location>
        <position position="5"/>
    </location>
</feature>
<feature type="sequence conflict" description="In Ref. 4; AAM63434." evidence="6" ref="4">
    <original>V</original>
    <variation>I</variation>
    <location>
        <position position="28"/>
    </location>
</feature>
<gene>
    <name evidence="4" type="primary">LSM6A</name>
    <name evidence="7" type="ordered locus">At3g59810</name>
    <name evidence="8" type="ORF">F24G16.80</name>
</gene>
<comment type="function">
    <text evidence="2 3">Component of LSM protein complexes, which are involved in RNA processing. Component of the cytoplasmic LSM1-LSM7 complex which is involved in mRNA degradation by promoting decapping and leading to accurate 5'-3' mRNA decay. The cytoplasmic LSM1-LSM7 complex regulates developmental gene expression by the decapping of specific development-related transcripts. Component of the nuclear LSM2-LSM8 complex which is involved splicing nuclear mRNAs. LSM2-LSM8 binds directly to the U6 small nuclear RNAs (snRNAs) and is essential for accurate splicing of selected development-related mRNAs through the stabilization of the spliceosomal U6 snRNA. Plays a critical role in the regulation of development-related gene expression.</text>
</comment>
<comment type="subunit">
    <text evidence="2 3">Component of the heptameric LSM1-LSM7 complex that forms a seven-membered ring structure with a donut shape. The LSM subunits are arranged in the order LSM1, LSM2, LSM3, LSM6, LSM5, LSM7 and LSM4. Component of the heptameric LSM2-LSM8 complex that forms a seven-membered ring structure with a donut shape. The LSM subunits are arranged in the order LSM8, LSM2, LSM3, LSM6, LSM5, LSM7 and LSM4 (PubMed:23221597, PubMed:23620288). LSM6A subunit interacts only with its two neighboring subunits, LSM3A or LSM3B and LSM5 (PubMed:23221597).</text>
</comment>
<comment type="interaction">
    <interactant intactId="EBI-4431531">
        <id>Q9M1Z3</id>
    </interactant>
    <interactant intactId="EBI-16419382">
        <id>Q9FKB0</id>
        <label>LSM5</label>
    </interactant>
    <organismsDiffer>false</organismsDiffer>
    <experiments>3</experiments>
</comment>
<comment type="subcellular location">
    <subcellularLocation>
        <location evidence="2">Cytoplasm</location>
    </subcellularLocation>
    <subcellularLocation>
        <location evidence="2">Nucleus</location>
    </subcellularLocation>
</comment>
<comment type="tissue specificity">
    <text evidence="2 3">Expressed in roots, leaves, stems, flowers and siliques.</text>
</comment>
<comment type="similarity">
    <text evidence="6">Belongs to the snRNP Sm proteins family.</text>
</comment>
<reference key="1">
    <citation type="journal article" date="2000" name="Nature">
        <title>Sequence and analysis of chromosome 3 of the plant Arabidopsis thaliana.</title>
        <authorList>
            <person name="Salanoubat M."/>
            <person name="Lemcke K."/>
            <person name="Rieger M."/>
            <person name="Ansorge W."/>
            <person name="Unseld M."/>
            <person name="Fartmann B."/>
            <person name="Valle G."/>
            <person name="Bloecker H."/>
            <person name="Perez-Alonso M."/>
            <person name="Obermaier B."/>
            <person name="Delseny M."/>
            <person name="Boutry M."/>
            <person name="Grivell L.A."/>
            <person name="Mache R."/>
            <person name="Puigdomenech P."/>
            <person name="De Simone V."/>
            <person name="Choisne N."/>
            <person name="Artiguenave F."/>
            <person name="Robert C."/>
            <person name="Brottier P."/>
            <person name="Wincker P."/>
            <person name="Cattolico L."/>
            <person name="Weissenbach J."/>
            <person name="Saurin W."/>
            <person name="Quetier F."/>
            <person name="Schaefer M."/>
            <person name="Mueller-Auer S."/>
            <person name="Gabel C."/>
            <person name="Fuchs M."/>
            <person name="Benes V."/>
            <person name="Wurmbach E."/>
            <person name="Drzonek H."/>
            <person name="Erfle H."/>
            <person name="Jordan N."/>
            <person name="Bangert S."/>
            <person name="Wiedelmann R."/>
            <person name="Kranz H."/>
            <person name="Voss H."/>
            <person name="Holland R."/>
            <person name="Brandt P."/>
            <person name="Nyakatura G."/>
            <person name="Vezzi A."/>
            <person name="D'Angelo M."/>
            <person name="Pallavicini A."/>
            <person name="Toppo S."/>
            <person name="Simionati B."/>
            <person name="Conrad A."/>
            <person name="Hornischer K."/>
            <person name="Kauer G."/>
            <person name="Loehnert T.-H."/>
            <person name="Nordsiek G."/>
            <person name="Reichelt J."/>
            <person name="Scharfe M."/>
            <person name="Schoen O."/>
            <person name="Bargues M."/>
            <person name="Terol J."/>
            <person name="Climent J."/>
            <person name="Navarro P."/>
            <person name="Collado C."/>
            <person name="Perez-Perez A."/>
            <person name="Ottenwaelder B."/>
            <person name="Duchemin D."/>
            <person name="Cooke R."/>
            <person name="Laudie M."/>
            <person name="Berger-Llauro C."/>
            <person name="Purnelle B."/>
            <person name="Masuy D."/>
            <person name="de Haan M."/>
            <person name="Maarse A.C."/>
            <person name="Alcaraz J.-P."/>
            <person name="Cottet A."/>
            <person name="Casacuberta E."/>
            <person name="Monfort A."/>
            <person name="Argiriou A."/>
            <person name="Flores M."/>
            <person name="Liguori R."/>
            <person name="Vitale D."/>
            <person name="Mannhaupt G."/>
            <person name="Haase D."/>
            <person name="Schoof H."/>
            <person name="Rudd S."/>
            <person name="Zaccaria P."/>
            <person name="Mewes H.-W."/>
            <person name="Mayer K.F.X."/>
            <person name="Kaul S."/>
            <person name="Town C.D."/>
            <person name="Koo H.L."/>
            <person name="Tallon L.J."/>
            <person name="Jenkins J."/>
            <person name="Rooney T."/>
            <person name="Rizzo M."/>
            <person name="Walts A."/>
            <person name="Utterback T."/>
            <person name="Fujii C.Y."/>
            <person name="Shea T.P."/>
            <person name="Creasy T.H."/>
            <person name="Haas B."/>
            <person name="Maiti R."/>
            <person name="Wu D."/>
            <person name="Peterson J."/>
            <person name="Van Aken S."/>
            <person name="Pai G."/>
            <person name="Militscher J."/>
            <person name="Sellers P."/>
            <person name="Gill J.E."/>
            <person name="Feldblyum T.V."/>
            <person name="Preuss D."/>
            <person name="Lin X."/>
            <person name="Nierman W.C."/>
            <person name="Salzberg S.L."/>
            <person name="White O."/>
            <person name="Venter J.C."/>
            <person name="Fraser C.M."/>
            <person name="Kaneko T."/>
            <person name="Nakamura Y."/>
            <person name="Sato S."/>
            <person name="Kato T."/>
            <person name="Asamizu E."/>
            <person name="Sasamoto S."/>
            <person name="Kimura T."/>
            <person name="Idesawa K."/>
            <person name="Kawashima K."/>
            <person name="Kishida Y."/>
            <person name="Kiyokawa C."/>
            <person name="Kohara M."/>
            <person name="Matsumoto M."/>
            <person name="Matsuno A."/>
            <person name="Muraki A."/>
            <person name="Nakayama S."/>
            <person name="Nakazaki N."/>
            <person name="Shinpo S."/>
            <person name="Takeuchi C."/>
            <person name="Wada T."/>
            <person name="Watanabe A."/>
            <person name="Yamada M."/>
            <person name="Yasuda M."/>
            <person name="Tabata S."/>
        </authorList>
    </citation>
    <scope>NUCLEOTIDE SEQUENCE [LARGE SCALE GENOMIC DNA]</scope>
    <source>
        <strain>cv. Columbia</strain>
    </source>
</reference>
<reference key="2">
    <citation type="journal article" date="2017" name="Plant J.">
        <title>Araport11: a complete reannotation of the Arabidopsis thaliana reference genome.</title>
        <authorList>
            <person name="Cheng C.Y."/>
            <person name="Krishnakumar V."/>
            <person name="Chan A.P."/>
            <person name="Thibaud-Nissen F."/>
            <person name="Schobel S."/>
            <person name="Town C.D."/>
        </authorList>
    </citation>
    <scope>GENOME REANNOTATION</scope>
    <source>
        <strain>cv. Columbia</strain>
    </source>
</reference>
<reference key="3">
    <citation type="journal article" date="2003" name="Science">
        <title>Empirical analysis of transcriptional activity in the Arabidopsis genome.</title>
        <authorList>
            <person name="Yamada K."/>
            <person name="Lim J."/>
            <person name="Dale J.M."/>
            <person name="Chen H."/>
            <person name="Shinn P."/>
            <person name="Palm C.J."/>
            <person name="Southwick A.M."/>
            <person name="Wu H.C."/>
            <person name="Kim C.J."/>
            <person name="Nguyen M."/>
            <person name="Pham P.K."/>
            <person name="Cheuk R.F."/>
            <person name="Karlin-Newmann G."/>
            <person name="Liu S.X."/>
            <person name="Lam B."/>
            <person name="Sakano H."/>
            <person name="Wu T."/>
            <person name="Yu G."/>
            <person name="Miranda M."/>
            <person name="Quach H.L."/>
            <person name="Tripp M."/>
            <person name="Chang C.H."/>
            <person name="Lee J.M."/>
            <person name="Toriumi M.J."/>
            <person name="Chan M.M."/>
            <person name="Tang C.C."/>
            <person name="Onodera C.S."/>
            <person name="Deng J.M."/>
            <person name="Akiyama K."/>
            <person name="Ansari Y."/>
            <person name="Arakawa T."/>
            <person name="Banh J."/>
            <person name="Banno F."/>
            <person name="Bowser L."/>
            <person name="Brooks S.Y."/>
            <person name="Carninci P."/>
            <person name="Chao Q."/>
            <person name="Choy N."/>
            <person name="Enju A."/>
            <person name="Goldsmith A.D."/>
            <person name="Gurjal M."/>
            <person name="Hansen N.F."/>
            <person name="Hayashizaki Y."/>
            <person name="Johnson-Hopson C."/>
            <person name="Hsuan V.W."/>
            <person name="Iida K."/>
            <person name="Karnes M."/>
            <person name="Khan S."/>
            <person name="Koesema E."/>
            <person name="Ishida J."/>
            <person name="Jiang P.X."/>
            <person name="Jones T."/>
            <person name="Kawai J."/>
            <person name="Kamiya A."/>
            <person name="Meyers C."/>
            <person name="Nakajima M."/>
            <person name="Narusaka M."/>
            <person name="Seki M."/>
            <person name="Sakurai T."/>
            <person name="Satou M."/>
            <person name="Tamse R."/>
            <person name="Vaysberg M."/>
            <person name="Wallender E.K."/>
            <person name="Wong C."/>
            <person name="Yamamura Y."/>
            <person name="Yuan S."/>
            <person name="Shinozaki K."/>
            <person name="Davis R.W."/>
            <person name="Theologis A."/>
            <person name="Ecker J.R."/>
        </authorList>
    </citation>
    <scope>NUCLEOTIDE SEQUENCE [LARGE SCALE MRNA]</scope>
    <source>
        <strain>cv. Columbia</strain>
    </source>
</reference>
<reference key="4">
    <citation type="submission" date="2002-03" db="EMBL/GenBank/DDBJ databases">
        <title>Full-length cDNA from Arabidopsis thaliana.</title>
        <authorList>
            <person name="Brover V.V."/>
            <person name="Troukhan M.E."/>
            <person name="Alexandrov N.A."/>
            <person name="Lu Y.-P."/>
            <person name="Flavell R.B."/>
            <person name="Feldmann K.A."/>
        </authorList>
    </citation>
    <scope>NUCLEOTIDE SEQUENCE [LARGE SCALE MRNA]</scope>
</reference>
<reference key="5">
    <citation type="journal article" date="2012" name="Plant Cell">
        <title>LSM proteins provide accurate splicing and decay of selected transcripts to ensure normal Arabidopsis development.</title>
        <authorList>
            <person name="Perea-Resa C."/>
            <person name="Hernandez-Verdeja T."/>
            <person name="Lopez-Cobollo R."/>
            <person name="del Mar Castellano M."/>
            <person name="Salinas J."/>
        </authorList>
    </citation>
    <scope>FUNCTION</scope>
    <scope>SUBUNIT</scope>
    <scope>INTERACTION WITH LSM3A; LSM3B AND LSM5</scope>
    <scope>SUBCELLULAR LOCATION</scope>
    <scope>TISSUE SPECIFICITY</scope>
    <scope>GENE FAMILY</scope>
</reference>
<reference key="6">
    <citation type="journal article" date="2013" name="Nucleic Acids Res.">
        <title>Arabidopsis thaliana LSM proteins function in mRNA splicing and degradation.</title>
        <authorList>
            <person name="Golisz A."/>
            <person name="Sikorski P.J."/>
            <person name="Kruszka K."/>
            <person name="Kufel J."/>
        </authorList>
    </citation>
    <scope>IDENTIFICATION BY MASS SPECTROMETRY</scope>
    <scope>FUNCTION</scope>
    <scope>SUBUNIT</scope>
    <scope>TISSUE SPECIFICITY</scope>
</reference>
<name>LSM6A_ARATH</name>
<dbReference type="EMBL" id="AL138647">
    <property type="protein sequence ID" value="CAB75800.1"/>
    <property type="molecule type" value="Genomic_DNA"/>
</dbReference>
<dbReference type="EMBL" id="CP002686">
    <property type="protein sequence ID" value="AEE79971.1"/>
    <property type="molecule type" value="Genomic_DNA"/>
</dbReference>
<dbReference type="EMBL" id="CP002686">
    <property type="protein sequence ID" value="ANM65508.1"/>
    <property type="molecule type" value="Genomic_DNA"/>
</dbReference>
<dbReference type="EMBL" id="CP002686">
    <property type="protein sequence ID" value="ANM65509.1"/>
    <property type="molecule type" value="Genomic_DNA"/>
</dbReference>
<dbReference type="EMBL" id="BT002850">
    <property type="protein sequence ID" value="AAO22668.1"/>
    <property type="molecule type" value="mRNA"/>
</dbReference>
<dbReference type="EMBL" id="BT004433">
    <property type="protein sequence ID" value="AAO42427.1"/>
    <property type="molecule type" value="mRNA"/>
</dbReference>
<dbReference type="EMBL" id="AY086430">
    <property type="protein sequence ID" value="AAM63434.1"/>
    <property type="molecule type" value="mRNA"/>
</dbReference>
<dbReference type="PIR" id="T47805">
    <property type="entry name" value="T47805"/>
</dbReference>
<dbReference type="RefSeq" id="NP_001327468.1">
    <property type="nucleotide sequence ID" value="NM_001340000.1"/>
</dbReference>
<dbReference type="RefSeq" id="NP_001327469.1">
    <property type="nucleotide sequence ID" value="NM_001340001.1"/>
</dbReference>
<dbReference type="RefSeq" id="NP_191540.1">
    <property type="nucleotide sequence ID" value="NM_115843.3"/>
</dbReference>
<dbReference type="SMR" id="Q9M1Z3"/>
<dbReference type="ComplexPortal" id="CPX-1308">
    <property type="entry name" value="LSM1-7-PAT1 complex, variant LSM1A-LSM3A-LSM6A-PAT1"/>
</dbReference>
<dbReference type="ComplexPortal" id="CPX-1309">
    <property type="entry name" value="LSM2-8 complex, variant LSM3A-LSM6A"/>
</dbReference>
<dbReference type="ComplexPortal" id="CPX-1346">
    <property type="entry name" value="LSM1-7-PAT1 complex, variant LSM1A-LSM3B-LSM6A-PAT1"/>
</dbReference>
<dbReference type="ComplexPortal" id="CPX-1347">
    <property type="entry name" value="LSM1-7-PAT1 complex, variant LSM1B-LSM3A-LSM6A-PAT1"/>
</dbReference>
<dbReference type="ComplexPortal" id="CPX-1348">
    <property type="entry name" value="LSM1-7-PAT1 complex, variant LSM1B-LSM3B-LSM6A-PAT1"/>
</dbReference>
<dbReference type="ComplexPortal" id="CPX-1353">
    <property type="entry name" value="LSM2-8 complex, variant LSM3B-LSM6A"/>
</dbReference>
<dbReference type="ComplexPortal" id="CPX-1391">
    <property type="entry name" value="LSM1-7-PAT1 complex, variant LSM1A-LSM3A-LSM6A-PAT1H1"/>
</dbReference>
<dbReference type="ComplexPortal" id="CPX-1393">
    <property type="entry name" value="LSM1-7-PAT1 complex, variant LSM1A-LSM3B-LSM6A-PAT1H1"/>
</dbReference>
<dbReference type="ComplexPortal" id="CPX-1395">
    <property type="entry name" value="LSM1-7-PAT1 complex, variant LSM1B-LSM3A-LSM6A-PAT1H1"/>
</dbReference>
<dbReference type="ComplexPortal" id="CPX-1397">
    <property type="entry name" value="LSM1-7-PAT1 complex, variant LSM1B-LSM3B-LSM6A-PAT1H1"/>
</dbReference>
<dbReference type="ComplexPortal" id="CPX-1399">
    <property type="entry name" value="LSM1-7-PAT1 complex, variant LSM1A-LSM3A-LSM6A-PAT1H2"/>
</dbReference>
<dbReference type="ComplexPortal" id="CPX-1401">
    <property type="entry name" value="LSM1-7-PAT1 complex, variant LSM1A-LSM3B-LSM6A-PAT1H2"/>
</dbReference>
<dbReference type="ComplexPortal" id="CPX-1403">
    <property type="entry name" value="LSM1-7-PAT1 complex, variant LSM1B-LSM3A-LSM6A-PAT1H2"/>
</dbReference>
<dbReference type="ComplexPortal" id="CPX-1405">
    <property type="entry name" value="LSM1-7-PAT1 complex, variant LSM1B-LSM3B-LSM6A-PAT1H2"/>
</dbReference>
<dbReference type="FunCoup" id="Q9M1Z3">
    <property type="interactions" value="3828"/>
</dbReference>
<dbReference type="IntAct" id="Q9M1Z3">
    <property type="interactions" value="5"/>
</dbReference>
<dbReference type="STRING" id="3702.Q9M1Z3"/>
<dbReference type="iPTMnet" id="Q9M1Z3"/>
<dbReference type="PaxDb" id="3702-AT3G59810.1"/>
<dbReference type="ProMEX" id="Q9M1Z3"/>
<dbReference type="ProteomicsDB" id="238737"/>
<dbReference type="EnsemblPlants" id="AT3G59810.1">
    <property type="protein sequence ID" value="AT3G59810.1"/>
    <property type="gene ID" value="AT3G59810"/>
</dbReference>
<dbReference type="EnsemblPlants" id="AT3G59810.2">
    <property type="protein sequence ID" value="AT3G59810.2"/>
    <property type="gene ID" value="AT3G59810"/>
</dbReference>
<dbReference type="EnsemblPlants" id="AT3G59810.3">
    <property type="protein sequence ID" value="AT3G59810.3"/>
    <property type="gene ID" value="AT3G59810"/>
</dbReference>
<dbReference type="GeneID" id="825150"/>
<dbReference type="Gramene" id="AT3G59810.1">
    <property type="protein sequence ID" value="AT3G59810.1"/>
    <property type="gene ID" value="AT3G59810"/>
</dbReference>
<dbReference type="Gramene" id="AT3G59810.2">
    <property type="protein sequence ID" value="AT3G59810.2"/>
    <property type="gene ID" value="AT3G59810"/>
</dbReference>
<dbReference type="Gramene" id="AT3G59810.3">
    <property type="protein sequence ID" value="AT3G59810.3"/>
    <property type="gene ID" value="AT3G59810"/>
</dbReference>
<dbReference type="KEGG" id="ath:AT3G59810"/>
<dbReference type="Araport" id="AT3G59810"/>
<dbReference type="TAIR" id="AT3G59810">
    <property type="gene designation" value="LSM6A"/>
</dbReference>
<dbReference type="eggNOG" id="KOG1783">
    <property type="taxonomic scope" value="Eukaryota"/>
</dbReference>
<dbReference type="HOGENOM" id="CLU_076902_7_5_1"/>
<dbReference type="InParanoid" id="Q9M1Z3"/>
<dbReference type="OMA" id="EQTVEYV"/>
<dbReference type="PhylomeDB" id="Q9M1Z3"/>
<dbReference type="PRO" id="PR:Q9M1Z3"/>
<dbReference type="Proteomes" id="UP000006548">
    <property type="component" value="Chromosome 3"/>
</dbReference>
<dbReference type="ExpressionAtlas" id="Q9M1Z3">
    <property type="expression patterns" value="baseline and differential"/>
</dbReference>
<dbReference type="GO" id="GO:1990726">
    <property type="term" value="C:Lsm1-7-Pat1 complex"/>
    <property type="evidence" value="ECO:0000303"/>
    <property type="project" value="ComplexPortal"/>
</dbReference>
<dbReference type="GO" id="GO:0120115">
    <property type="term" value="C:Lsm2-8 complex"/>
    <property type="evidence" value="ECO:0000315"/>
    <property type="project" value="ComplexPortal"/>
</dbReference>
<dbReference type="GO" id="GO:0005634">
    <property type="term" value="C:nucleus"/>
    <property type="evidence" value="ECO:0000314"/>
    <property type="project" value="ComplexPortal"/>
</dbReference>
<dbReference type="GO" id="GO:0000932">
    <property type="term" value="C:P-body"/>
    <property type="evidence" value="ECO:0000303"/>
    <property type="project" value="ComplexPortal"/>
</dbReference>
<dbReference type="GO" id="GO:0005681">
    <property type="term" value="C:spliceosomal complex"/>
    <property type="evidence" value="ECO:0007669"/>
    <property type="project" value="UniProtKB-KW"/>
</dbReference>
<dbReference type="GO" id="GO:0003723">
    <property type="term" value="F:RNA binding"/>
    <property type="evidence" value="ECO:0007669"/>
    <property type="project" value="UniProtKB-KW"/>
</dbReference>
<dbReference type="GO" id="GO:0000290">
    <property type="term" value="P:deadenylation-dependent decapping of nuclear-transcribed mRNA"/>
    <property type="evidence" value="ECO:0000303"/>
    <property type="project" value="ComplexPortal"/>
</dbReference>
<dbReference type="GO" id="GO:0000398">
    <property type="term" value="P:mRNA splicing, via spliceosome"/>
    <property type="evidence" value="ECO:0000315"/>
    <property type="project" value="ComplexPortal"/>
</dbReference>
<dbReference type="CDD" id="cd01726">
    <property type="entry name" value="LSm6"/>
    <property type="match status" value="1"/>
</dbReference>
<dbReference type="FunFam" id="2.30.30.100:FF:000010">
    <property type="entry name" value="U6 snRNA-associated Sm-like protein LSm6"/>
    <property type="match status" value="1"/>
</dbReference>
<dbReference type="Gene3D" id="2.30.30.100">
    <property type="match status" value="1"/>
</dbReference>
<dbReference type="InterPro" id="IPR016487">
    <property type="entry name" value="Lsm6/sSmF"/>
</dbReference>
<dbReference type="InterPro" id="IPR010920">
    <property type="entry name" value="LSM_dom_sf"/>
</dbReference>
<dbReference type="InterPro" id="IPR047575">
    <property type="entry name" value="Sm"/>
</dbReference>
<dbReference type="InterPro" id="IPR001163">
    <property type="entry name" value="Sm_dom_euk/arc"/>
</dbReference>
<dbReference type="PANTHER" id="PTHR11021:SF8">
    <property type="entry name" value="SM-LIKE PROTEIN LSM36B-RELATED"/>
    <property type="match status" value="1"/>
</dbReference>
<dbReference type="PANTHER" id="PTHR11021">
    <property type="entry name" value="SMALL NUCLEAR RIBONUCLEOPROTEIN F SNRNP-F"/>
    <property type="match status" value="1"/>
</dbReference>
<dbReference type="Pfam" id="PF01423">
    <property type="entry name" value="LSM"/>
    <property type="match status" value="1"/>
</dbReference>
<dbReference type="SMART" id="SM00651">
    <property type="entry name" value="Sm"/>
    <property type="match status" value="1"/>
</dbReference>
<dbReference type="SUPFAM" id="SSF50182">
    <property type="entry name" value="Sm-like ribonucleoproteins"/>
    <property type="match status" value="1"/>
</dbReference>
<dbReference type="PROSITE" id="PS52002">
    <property type="entry name" value="SM"/>
    <property type="match status" value="1"/>
</dbReference>